<accession>Q8G9G3</accession>
<keyword id="KW-0694">RNA-binding</keyword>
<keyword id="KW-0804">Transcription</keyword>
<keyword id="KW-0889">Transcription antitermination</keyword>
<keyword id="KW-0805">Transcription regulation</keyword>
<dbReference type="EMBL" id="AB076605">
    <property type="protein sequence ID" value="BAC44861.1"/>
    <property type="molecule type" value="Genomic_DNA"/>
</dbReference>
<dbReference type="RefSeq" id="WP_005418093.1">
    <property type="nucleotide sequence ID" value="NZ_WOBZ01000001.1"/>
</dbReference>
<dbReference type="SMR" id="Q8G9G3"/>
<dbReference type="GeneID" id="54163359"/>
<dbReference type="OMA" id="DRMPVVD"/>
<dbReference type="GO" id="GO:0005829">
    <property type="term" value="C:cytosol"/>
    <property type="evidence" value="ECO:0007669"/>
    <property type="project" value="TreeGrafter"/>
</dbReference>
<dbReference type="GO" id="GO:0003723">
    <property type="term" value="F:RNA binding"/>
    <property type="evidence" value="ECO:0007669"/>
    <property type="project" value="UniProtKB-UniRule"/>
</dbReference>
<dbReference type="GO" id="GO:0006353">
    <property type="term" value="P:DNA-templated transcription termination"/>
    <property type="evidence" value="ECO:0007669"/>
    <property type="project" value="UniProtKB-UniRule"/>
</dbReference>
<dbReference type="GO" id="GO:0031564">
    <property type="term" value="P:transcription antitermination"/>
    <property type="evidence" value="ECO:0007669"/>
    <property type="project" value="UniProtKB-KW"/>
</dbReference>
<dbReference type="FunFam" id="1.10.940.10:FF:000001">
    <property type="entry name" value="Transcription antitermination factor NusB"/>
    <property type="match status" value="1"/>
</dbReference>
<dbReference type="Gene3D" id="1.10.940.10">
    <property type="entry name" value="NusB-like"/>
    <property type="match status" value="1"/>
</dbReference>
<dbReference type="HAMAP" id="MF_00073">
    <property type="entry name" value="NusB"/>
    <property type="match status" value="1"/>
</dbReference>
<dbReference type="InterPro" id="IPR035926">
    <property type="entry name" value="NusB-like_sf"/>
</dbReference>
<dbReference type="InterPro" id="IPR011605">
    <property type="entry name" value="NusB_fam"/>
</dbReference>
<dbReference type="InterPro" id="IPR006027">
    <property type="entry name" value="NusB_RsmB_TIM44"/>
</dbReference>
<dbReference type="NCBIfam" id="TIGR01951">
    <property type="entry name" value="nusB"/>
    <property type="match status" value="1"/>
</dbReference>
<dbReference type="PANTHER" id="PTHR11078:SF3">
    <property type="entry name" value="ANTITERMINATION NUSB DOMAIN-CONTAINING PROTEIN"/>
    <property type="match status" value="1"/>
</dbReference>
<dbReference type="PANTHER" id="PTHR11078">
    <property type="entry name" value="N UTILIZATION SUBSTANCE PROTEIN B-RELATED"/>
    <property type="match status" value="1"/>
</dbReference>
<dbReference type="Pfam" id="PF01029">
    <property type="entry name" value="NusB"/>
    <property type="match status" value="1"/>
</dbReference>
<dbReference type="SUPFAM" id="SSF48013">
    <property type="entry name" value="NusB-like"/>
    <property type="match status" value="1"/>
</dbReference>
<name>NUSB_ALIFS</name>
<protein>
    <recommendedName>
        <fullName evidence="1">Transcription antitermination protein NusB</fullName>
    </recommendedName>
    <alternativeName>
        <fullName evidence="1">Antitermination factor NusB</fullName>
    </alternativeName>
</protein>
<proteinExistence type="inferred from homology"/>
<feature type="chain" id="PRO_0000176603" description="Transcription antitermination protein NusB">
    <location>
        <begin position="1"/>
        <end position="155"/>
    </location>
</feature>
<comment type="function">
    <text evidence="1">Involved in transcription antitermination. Required for transcription of ribosomal RNA (rRNA) genes. Binds specifically to the boxA antiterminator sequence of the ribosomal RNA (rrn) operons.</text>
</comment>
<comment type="similarity">
    <text evidence="1">Belongs to the NusB family.</text>
</comment>
<organism>
    <name type="scientific">Aliivibrio fischeri</name>
    <name type="common">Vibrio fischeri</name>
    <dbReference type="NCBI Taxonomy" id="668"/>
    <lineage>
        <taxon>Bacteria</taxon>
        <taxon>Pseudomonadati</taxon>
        <taxon>Pseudomonadota</taxon>
        <taxon>Gammaproteobacteria</taxon>
        <taxon>Vibrionales</taxon>
        <taxon>Vibrionaceae</taxon>
        <taxon>Aliivibrio</taxon>
    </lineage>
</organism>
<evidence type="ECO:0000255" key="1">
    <source>
        <dbReference type="HAMAP-Rule" id="MF_00073"/>
    </source>
</evidence>
<gene>
    <name evidence="1" type="primary">nusB</name>
</gene>
<reference key="1">
    <citation type="journal article" date="2002" name="Eur. J. Biochem.">
        <title>Stimulated biosynthesis of flavins in Photobacterium phosphoreum IFO 13896 and the presence of complete rib operons in two species of luminous bacteria.</title>
        <authorList>
            <person name="Kasai S."/>
            <person name="Sumimoto T."/>
        </authorList>
    </citation>
    <scope>NUCLEOTIDE SEQUENCE [GENOMIC DNA]</scope>
    <source>
        <strain>ATCC 7744 / DSM 507 / NCIMB 1281 / 398</strain>
    </source>
</reference>
<sequence length="155" mass="17843">MGVSVKPAARRNARQFALQAIYSWQLSKENVADIEEQFLTAEKYDEEEHHANEPKLQTPETDVAYFRDLFSGVALNHMKLDGKMRPYLSRPLQDLDQMELALLRMSIYEMMNRDDVPYKVVINEAIELAKVFAAEDSHKFVNGVLDKAAPTLRKK</sequence>